<protein>
    <recommendedName>
        <fullName evidence="1">3-hydroxyacyl-[acyl-carrier-protein] dehydratase FabZ</fullName>
        <ecNumber evidence="1">4.2.1.59</ecNumber>
    </recommendedName>
    <alternativeName>
        <fullName evidence="1">(3R)-hydroxymyristoyl-[acyl-carrier-protein] dehydratase</fullName>
        <shortName evidence="1">(3R)-hydroxymyristoyl-ACP dehydrase</shortName>
    </alternativeName>
    <alternativeName>
        <fullName evidence="1">Beta-hydroxyacyl-ACP dehydratase</fullName>
    </alternativeName>
</protein>
<sequence>MSNQMNTMDIKEILKYLPHRYPFLLIDRVLDFTAGESLHAIKNVTINEPFFVGHFPVAPVMPGVLILEAMAQATGLLAFKTMSSEPSPDVLYYFAGIDNARFKRVVEPGDQLHFEVKMIKERRGIGVFYGEAKVDGELVCSAEIMCARREISK</sequence>
<comment type="function">
    <text evidence="1">Involved in unsaturated fatty acids biosynthesis. Catalyzes the dehydration of short chain beta-hydroxyacyl-ACPs and long chain saturated and unsaturated beta-hydroxyacyl-ACPs.</text>
</comment>
<comment type="catalytic activity">
    <reaction evidence="1">
        <text>a (3R)-hydroxyacyl-[ACP] = a (2E)-enoyl-[ACP] + H2O</text>
        <dbReference type="Rhea" id="RHEA:13097"/>
        <dbReference type="Rhea" id="RHEA-COMP:9925"/>
        <dbReference type="Rhea" id="RHEA-COMP:9945"/>
        <dbReference type="ChEBI" id="CHEBI:15377"/>
        <dbReference type="ChEBI" id="CHEBI:78784"/>
        <dbReference type="ChEBI" id="CHEBI:78827"/>
        <dbReference type="EC" id="4.2.1.59"/>
    </reaction>
</comment>
<comment type="subcellular location">
    <subcellularLocation>
        <location evidence="1">Cytoplasm</location>
    </subcellularLocation>
</comment>
<comment type="similarity">
    <text evidence="1">Belongs to the thioester dehydratase family. FabZ subfamily.</text>
</comment>
<gene>
    <name evidence="1" type="primary">fabZ</name>
    <name type="ordered locus">Sama_1150</name>
</gene>
<proteinExistence type="inferred from homology"/>
<evidence type="ECO:0000255" key="1">
    <source>
        <dbReference type="HAMAP-Rule" id="MF_00406"/>
    </source>
</evidence>
<accession>A1S4Q1</accession>
<reference key="1">
    <citation type="submission" date="2006-12" db="EMBL/GenBank/DDBJ databases">
        <title>Complete sequence of Shewanella amazonensis SB2B.</title>
        <authorList>
            <consortium name="US DOE Joint Genome Institute"/>
            <person name="Copeland A."/>
            <person name="Lucas S."/>
            <person name="Lapidus A."/>
            <person name="Barry K."/>
            <person name="Detter J.C."/>
            <person name="Glavina del Rio T."/>
            <person name="Hammon N."/>
            <person name="Israni S."/>
            <person name="Dalin E."/>
            <person name="Tice H."/>
            <person name="Pitluck S."/>
            <person name="Munk A.C."/>
            <person name="Brettin T."/>
            <person name="Bruce D."/>
            <person name="Han C."/>
            <person name="Tapia R."/>
            <person name="Gilna P."/>
            <person name="Schmutz J."/>
            <person name="Larimer F."/>
            <person name="Land M."/>
            <person name="Hauser L."/>
            <person name="Kyrpides N."/>
            <person name="Mikhailova N."/>
            <person name="Fredrickson J."/>
            <person name="Richardson P."/>
        </authorList>
    </citation>
    <scope>NUCLEOTIDE SEQUENCE [LARGE SCALE GENOMIC DNA]</scope>
    <source>
        <strain>ATCC BAA-1098 / SB2B</strain>
    </source>
</reference>
<feature type="chain" id="PRO_0000301923" description="3-hydroxyacyl-[acyl-carrier-protein] dehydratase FabZ">
    <location>
        <begin position="1"/>
        <end position="153"/>
    </location>
</feature>
<feature type="active site" evidence="1">
    <location>
        <position position="54"/>
    </location>
</feature>
<organism>
    <name type="scientific">Shewanella amazonensis (strain ATCC BAA-1098 / SB2B)</name>
    <dbReference type="NCBI Taxonomy" id="326297"/>
    <lineage>
        <taxon>Bacteria</taxon>
        <taxon>Pseudomonadati</taxon>
        <taxon>Pseudomonadota</taxon>
        <taxon>Gammaproteobacteria</taxon>
        <taxon>Alteromonadales</taxon>
        <taxon>Shewanellaceae</taxon>
        <taxon>Shewanella</taxon>
    </lineage>
</organism>
<dbReference type="EC" id="4.2.1.59" evidence="1"/>
<dbReference type="EMBL" id="CP000507">
    <property type="protein sequence ID" value="ABL99357.1"/>
    <property type="molecule type" value="Genomic_DNA"/>
</dbReference>
<dbReference type="RefSeq" id="WP_011759266.1">
    <property type="nucleotide sequence ID" value="NC_008700.1"/>
</dbReference>
<dbReference type="SMR" id="A1S4Q1"/>
<dbReference type="STRING" id="326297.Sama_1150"/>
<dbReference type="KEGG" id="saz:Sama_1150"/>
<dbReference type="eggNOG" id="COG0764">
    <property type="taxonomic scope" value="Bacteria"/>
</dbReference>
<dbReference type="HOGENOM" id="CLU_078912_1_0_6"/>
<dbReference type="OrthoDB" id="9772788at2"/>
<dbReference type="Proteomes" id="UP000009175">
    <property type="component" value="Chromosome"/>
</dbReference>
<dbReference type="GO" id="GO:0005737">
    <property type="term" value="C:cytoplasm"/>
    <property type="evidence" value="ECO:0007669"/>
    <property type="project" value="UniProtKB-SubCell"/>
</dbReference>
<dbReference type="GO" id="GO:0016020">
    <property type="term" value="C:membrane"/>
    <property type="evidence" value="ECO:0007669"/>
    <property type="project" value="GOC"/>
</dbReference>
<dbReference type="GO" id="GO:0019171">
    <property type="term" value="F:(3R)-hydroxyacyl-[acyl-carrier-protein] dehydratase activity"/>
    <property type="evidence" value="ECO:0007669"/>
    <property type="project" value="UniProtKB-EC"/>
</dbReference>
<dbReference type="GO" id="GO:0006633">
    <property type="term" value="P:fatty acid biosynthetic process"/>
    <property type="evidence" value="ECO:0007669"/>
    <property type="project" value="UniProtKB-UniRule"/>
</dbReference>
<dbReference type="GO" id="GO:0009245">
    <property type="term" value="P:lipid A biosynthetic process"/>
    <property type="evidence" value="ECO:0007669"/>
    <property type="project" value="UniProtKB-UniRule"/>
</dbReference>
<dbReference type="CDD" id="cd01288">
    <property type="entry name" value="FabZ"/>
    <property type="match status" value="1"/>
</dbReference>
<dbReference type="FunFam" id="3.10.129.10:FF:000001">
    <property type="entry name" value="3-hydroxyacyl-[acyl-carrier-protein] dehydratase FabZ"/>
    <property type="match status" value="1"/>
</dbReference>
<dbReference type="Gene3D" id="3.10.129.10">
    <property type="entry name" value="Hotdog Thioesterase"/>
    <property type="match status" value="1"/>
</dbReference>
<dbReference type="HAMAP" id="MF_00406">
    <property type="entry name" value="FabZ"/>
    <property type="match status" value="1"/>
</dbReference>
<dbReference type="InterPro" id="IPR013114">
    <property type="entry name" value="FabA_FabZ"/>
</dbReference>
<dbReference type="InterPro" id="IPR010084">
    <property type="entry name" value="FabZ"/>
</dbReference>
<dbReference type="InterPro" id="IPR029069">
    <property type="entry name" value="HotDog_dom_sf"/>
</dbReference>
<dbReference type="NCBIfam" id="TIGR01750">
    <property type="entry name" value="fabZ"/>
    <property type="match status" value="1"/>
</dbReference>
<dbReference type="NCBIfam" id="NF000582">
    <property type="entry name" value="PRK00006.1"/>
    <property type="match status" value="1"/>
</dbReference>
<dbReference type="PANTHER" id="PTHR30272">
    <property type="entry name" value="3-HYDROXYACYL-[ACYL-CARRIER-PROTEIN] DEHYDRATASE"/>
    <property type="match status" value="1"/>
</dbReference>
<dbReference type="PANTHER" id="PTHR30272:SF1">
    <property type="entry name" value="3-HYDROXYACYL-[ACYL-CARRIER-PROTEIN] DEHYDRATASE"/>
    <property type="match status" value="1"/>
</dbReference>
<dbReference type="Pfam" id="PF07977">
    <property type="entry name" value="FabA"/>
    <property type="match status" value="1"/>
</dbReference>
<dbReference type="SUPFAM" id="SSF54637">
    <property type="entry name" value="Thioesterase/thiol ester dehydrase-isomerase"/>
    <property type="match status" value="1"/>
</dbReference>
<name>FABZ_SHEAM</name>
<keyword id="KW-0963">Cytoplasm</keyword>
<keyword id="KW-0441">Lipid A biosynthesis</keyword>
<keyword id="KW-0444">Lipid biosynthesis</keyword>
<keyword id="KW-0443">Lipid metabolism</keyword>
<keyword id="KW-0456">Lyase</keyword>
<keyword id="KW-1185">Reference proteome</keyword>